<keyword id="KW-0010">Activator</keyword>
<keyword id="KW-0877">Alternative promoter usage</keyword>
<keyword id="KW-0025">Alternative splicing</keyword>
<keyword id="KW-0903">Direct protein sequencing</keyword>
<keyword id="KW-0238">DNA-binding</keyword>
<keyword id="KW-0539">Nucleus</keyword>
<keyword id="KW-0597">Phosphoprotein</keyword>
<keyword id="KW-1185">Reference proteome</keyword>
<keyword id="KW-0804">Transcription</keyword>
<keyword id="KW-0805">Transcription regulation</keyword>
<gene>
    <name type="primary">kay</name>
    <name type="synonym">Fra</name>
    <name type="ORF">CG15509</name>
</gene>
<reference key="1">
    <citation type="journal article" date="1990" name="Genes Dev.">
        <title>The Drosophila Fos-related AP-1 protein is a developmentally regulated transcription factor.</title>
        <authorList>
            <person name="Perkins K.K."/>
            <person name="Admon A."/>
            <person name="Patel N."/>
            <person name="Tjian R."/>
        </authorList>
    </citation>
    <scope>NUCLEOTIDE SEQUENCE [MRNA] (ISOFORM A)</scope>
    <scope>PARTIAL PROTEIN SEQUENCE</scope>
    <scope>FUNCTION</scope>
    <scope>INTERACTION WITH JRA</scope>
    <scope>SUBCELLULAR LOCATION</scope>
    <scope>TISSUE SPECIFICITY</scope>
    <scope>DEVELOPMENTAL STAGE</scope>
    <source>
        <tissue>Embryo</tissue>
    </source>
</reference>
<reference key="2">
    <citation type="submission" date="2000-02" db="EMBL/GenBank/DDBJ databases">
        <authorList>
            <person name="Nairz K."/>
            <person name="Hafen E."/>
        </authorList>
    </citation>
    <scope>NUCLEOTIDE SEQUENCE [MRNA] (ISOFORM A)</scope>
    <source>
        <tissue>Embryo</tissue>
    </source>
</reference>
<reference key="3">
    <citation type="journal article" date="2001" name="Gene">
        <title>The gene structure of the Drosophila melanogaster homolog of the human proto-oncogene fos.</title>
        <authorList>
            <person name="Rousseau E."/>
            <person name="Goldstein E.S."/>
        </authorList>
    </citation>
    <scope>NUCLEOTIDE SEQUENCE [MRNA] (ISOFORM A)</scope>
</reference>
<reference key="4">
    <citation type="journal article" date="2008" name="Gene">
        <title>The gene structure of the Drosophila melanogaster proto-oncogene, kayak, and its nested gene, fos-intronic gene.</title>
        <authorList>
            <person name="Hudson S.G."/>
            <person name="Goldstein E.S."/>
        </authorList>
    </citation>
    <scope>NUCLEOTIDE SEQUENCE [MRNA] (ISOFORM B)</scope>
    <scope>ALTERNATIVE PROMOTER USAGE</scope>
    <scope>DEVELOPMENTAL STAGE</scope>
    <scope>DISRUPTION PHENOTYPE</scope>
</reference>
<reference key="5">
    <citation type="journal article" date="2000" name="Science">
        <title>The genome sequence of Drosophila melanogaster.</title>
        <authorList>
            <person name="Adams M.D."/>
            <person name="Celniker S.E."/>
            <person name="Holt R.A."/>
            <person name="Evans C.A."/>
            <person name="Gocayne J.D."/>
            <person name="Amanatides P.G."/>
            <person name="Scherer S.E."/>
            <person name="Li P.W."/>
            <person name="Hoskins R.A."/>
            <person name="Galle R.F."/>
            <person name="George R.A."/>
            <person name="Lewis S.E."/>
            <person name="Richards S."/>
            <person name="Ashburner M."/>
            <person name="Henderson S.N."/>
            <person name="Sutton G.G."/>
            <person name="Wortman J.R."/>
            <person name="Yandell M.D."/>
            <person name="Zhang Q."/>
            <person name="Chen L.X."/>
            <person name="Brandon R.C."/>
            <person name="Rogers Y.-H.C."/>
            <person name="Blazej R.G."/>
            <person name="Champe M."/>
            <person name="Pfeiffer B.D."/>
            <person name="Wan K.H."/>
            <person name="Doyle C."/>
            <person name="Baxter E.G."/>
            <person name="Helt G."/>
            <person name="Nelson C.R."/>
            <person name="Miklos G.L.G."/>
            <person name="Abril J.F."/>
            <person name="Agbayani A."/>
            <person name="An H.-J."/>
            <person name="Andrews-Pfannkoch C."/>
            <person name="Baldwin D."/>
            <person name="Ballew R.M."/>
            <person name="Basu A."/>
            <person name="Baxendale J."/>
            <person name="Bayraktaroglu L."/>
            <person name="Beasley E.M."/>
            <person name="Beeson K.Y."/>
            <person name="Benos P.V."/>
            <person name="Berman B.P."/>
            <person name="Bhandari D."/>
            <person name="Bolshakov S."/>
            <person name="Borkova D."/>
            <person name="Botchan M.R."/>
            <person name="Bouck J."/>
            <person name="Brokstein P."/>
            <person name="Brottier P."/>
            <person name="Burtis K.C."/>
            <person name="Busam D.A."/>
            <person name="Butler H."/>
            <person name="Cadieu E."/>
            <person name="Center A."/>
            <person name="Chandra I."/>
            <person name="Cherry J.M."/>
            <person name="Cawley S."/>
            <person name="Dahlke C."/>
            <person name="Davenport L.B."/>
            <person name="Davies P."/>
            <person name="de Pablos B."/>
            <person name="Delcher A."/>
            <person name="Deng Z."/>
            <person name="Mays A.D."/>
            <person name="Dew I."/>
            <person name="Dietz S.M."/>
            <person name="Dodson K."/>
            <person name="Doup L.E."/>
            <person name="Downes M."/>
            <person name="Dugan-Rocha S."/>
            <person name="Dunkov B.C."/>
            <person name="Dunn P."/>
            <person name="Durbin K.J."/>
            <person name="Evangelista C.C."/>
            <person name="Ferraz C."/>
            <person name="Ferriera S."/>
            <person name="Fleischmann W."/>
            <person name="Fosler C."/>
            <person name="Gabrielian A.E."/>
            <person name="Garg N.S."/>
            <person name="Gelbart W.M."/>
            <person name="Glasser K."/>
            <person name="Glodek A."/>
            <person name="Gong F."/>
            <person name="Gorrell J.H."/>
            <person name="Gu Z."/>
            <person name="Guan P."/>
            <person name="Harris M."/>
            <person name="Harris N.L."/>
            <person name="Harvey D.A."/>
            <person name="Heiman T.J."/>
            <person name="Hernandez J.R."/>
            <person name="Houck J."/>
            <person name="Hostin D."/>
            <person name="Houston K.A."/>
            <person name="Howland T.J."/>
            <person name="Wei M.-H."/>
            <person name="Ibegwam C."/>
            <person name="Jalali M."/>
            <person name="Kalush F."/>
            <person name="Karpen G.H."/>
            <person name="Ke Z."/>
            <person name="Kennison J.A."/>
            <person name="Ketchum K.A."/>
            <person name="Kimmel B.E."/>
            <person name="Kodira C.D."/>
            <person name="Kraft C.L."/>
            <person name="Kravitz S."/>
            <person name="Kulp D."/>
            <person name="Lai Z."/>
            <person name="Lasko P."/>
            <person name="Lei Y."/>
            <person name="Levitsky A.A."/>
            <person name="Li J.H."/>
            <person name="Li Z."/>
            <person name="Liang Y."/>
            <person name="Lin X."/>
            <person name="Liu X."/>
            <person name="Mattei B."/>
            <person name="McIntosh T.C."/>
            <person name="McLeod M.P."/>
            <person name="McPherson D."/>
            <person name="Merkulov G."/>
            <person name="Milshina N.V."/>
            <person name="Mobarry C."/>
            <person name="Morris J."/>
            <person name="Moshrefi A."/>
            <person name="Mount S.M."/>
            <person name="Moy M."/>
            <person name="Murphy B."/>
            <person name="Murphy L."/>
            <person name="Muzny D.M."/>
            <person name="Nelson D.L."/>
            <person name="Nelson D.R."/>
            <person name="Nelson K.A."/>
            <person name="Nixon K."/>
            <person name="Nusskern D.R."/>
            <person name="Pacleb J.M."/>
            <person name="Palazzolo M."/>
            <person name="Pittman G.S."/>
            <person name="Pan S."/>
            <person name="Pollard J."/>
            <person name="Puri V."/>
            <person name="Reese M.G."/>
            <person name="Reinert K."/>
            <person name="Remington K."/>
            <person name="Saunders R.D.C."/>
            <person name="Scheeler F."/>
            <person name="Shen H."/>
            <person name="Shue B.C."/>
            <person name="Siden-Kiamos I."/>
            <person name="Simpson M."/>
            <person name="Skupski M.P."/>
            <person name="Smith T.J."/>
            <person name="Spier E."/>
            <person name="Spradling A.C."/>
            <person name="Stapleton M."/>
            <person name="Strong R."/>
            <person name="Sun E."/>
            <person name="Svirskas R."/>
            <person name="Tector C."/>
            <person name="Turner R."/>
            <person name="Venter E."/>
            <person name="Wang A.H."/>
            <person name="Wang X."/>
            <person name="Wang Z.-Y."/>
            <person name="Wassarman D.A."/>
            <person name="Weinstock G.M."/>
            <person name="Weissenbach J."/>
            <person name="Williams S.M."/>
            <person name="Woodage T."/>
            <person name="Worley K.C."/>
            <person name="Wu D."/>
            <person name="Yang S."/>
            <person name="Yao Q.A."/>
            <person name="Ye J."/>
            <person name="Yeh R.-F."/>
            <person name="Zaveri J.S."/>
            <person name="Zhan M."/>
            <person name="Zhang G."/>
            <person name="Zhao Q."/>
            <person name="Zheng L."/>
            <person name="Zheng X.H."/>
            <person name="Zhong F.N."/>
            <person name="Zhong W."/>
            <person name="Zhou X."/>
            <person name="Zhu S.C."/>
            <person name="Zhu X."/>
            <person name="Smith H.O."/>
            <person name="Gibbs R.A."/>
            <person name="Myers E.W."/>
            <person name="Rubin G.M."/>
            <person name="Venter J.C."/>
        </authorList>
    </citation>
    <scope>NUCLEOTIDE SEQUENCE [LARGE SCALE GENOMIC DNA]</scope>
    <source>
        <strain>Berkeley</strain>
    </source>
</reference>
<reference key="6">
    <citation type="journal article" date="2002" name="Genome Biol.">
        <title>Annotation of the Drosophila melanogaster euchromatic genome: a systematic review.</title>
        <authorList>
            <person name="Misra S."/>
            <person name="Crosby M.A."/>
            <person name="Mungall C.J."/>
            <person name="Matthews B.B."/>
            <person name="Campbell K.S."/>
            <person name="Hradecky P."/>
            <person name="Huang Y."/>
            <person name="Kaminker J.S."/>
            <person name="Millburn G.H."/>
            <person name="Prochnik S.E."/>
            <person name="Smith C.D."/>
            <person name="Tupy J.L."/>
            <person name="Whitfield E.J."/>
            <person name="Bayraktaroglu L."/>
            <person name="Berman B.P."/>
            <person name="Bettencourt B.R."/>
            <person name="Celniker S.E."/>
            <person name="de Grey A.D.N.J."/>
            <person name="Drysdale R.A."/>
            <person name="Harris N.L."/>
            <person name="Richter J."/>
            <person name="Russo S."/>
            <person name="Schroeder A.J."/>
            <person name="Shu S.Q."/>
            <person name="Stapleton M."/>
            <person name="Yamada C."/>
            <person name="Ashburner M."/>
            <person name="Gelbart W.M."/>
            <person name="Rubin G.M."/>
            <person name="Lewis S.E."/>
        </authorList>
    </citation>
    <scope>GENOME REANNOTATION</scope>
    <scope>ALTERNATIVE SPLICING</scope>
    <source>
        <strain>Berkeley</strain>
    </source>
</reference>
<reference key="7">
    <citation type="journal article" date="2002" name="Genome Biol.">
        <title>A Drosophila full-length cDNA resource.</title>
        <authorList>
            <person name="Stapleton M."/>
            <person name="Carlson J.W."/>
            <person name="Brokstein P."/>
            <person name="Yu C."/>
            <person name="Champe M."/>
            <person name="George R.A."/>
            <person name="Guarin H."/>
            <person name="Kronmiller B."/>
            <person name="Pacleb J.M."/>
            <person name="Park S."/>
            <person name="Wan K.H."/>
            <person name="Rubin G.M."/>
            <person name="Celniker S.E."/>
        </authorList>
    </citation>
    <scope>NUCLEOTIDE SEQUENCE [LARGE SCALE MRNA] (ISOFORM B)</scope>
    <source>
        <strain>Berkeley</strain>
        <tissue>Embryo</tissue>
    </source>
</reference>
<reference key="8">
    <citation type="journal article" date="2008" name="J. Proteome Res.">
        <title>Phosphoproteome analysis of Drosophila melanogaster embryos.</title>
        <authorList>
            <person name="Zhai B."/>
            <person name="Villen J."/>
            <person name="Beausoleil S.A."/>
            <person name="Mintseris J."/>
            <person name="Gygi S.P."/>
        </authorList>
    </citation>
    <scope>PHOSPHORYLATION [LARGE SCALE ANALYSIS] AT SER-548</scope>
    <scope>IDENTIFICATION BY MASS SPECTROMETRY</scope>
    <source>
        <tissue>Embryo</tissue>
    </source>
</reference>
<accession>P21525</accession>
<accession>A8MPI0</accession>
<accession>Q400M6</accession>
<accession>Q400M7</accession>
<accession>Q53YJ8</accession>
<accession>Q8T9E2</accession>
<accession>Q9BH37</accession>
<accession>Q9NBW7</accession>
<accession>Q9VAH5</accession>
<comment type="function">
    <text evidence="5">Developmentally regulated transcription factor AP-1 binds and recognizes the enhancer DNA sequence: 5'-TGA[CG]TCA-3'. May play a role in the function or determination of a particular subset of cells in the developing embryo. It is able to carry out its function either independently of or in conjunction with Jra.</text>
</comment>
<comment type="subunit">
    <text>Homodimer. Heterodimer with Jra. The kay-Jra heterodimer binds more stably to the AP-1 site than either of the two proteins alone.</text>
</comment>
<comment type="interaction">
    <interactant intactId="EBI-195448">
        <id>P21525</id>
    </interactant>
    <interactant intactId="EBI-159948">
        <id>P18289</id>
        <label>Jra</label>
    </interactant>
    <organismsDiffer>false</organismsDiffer>
    <experiments>4</experiments>
</comment>
<comment type="subcellular location">
    <subcellularLocation>
        <location evidence="1 5">Nucleus</location>
    </subcellularLocation>
</comment>
<comment type="alternative products">
    <event type="alternative promoter"/>
    <event type="alternative splicing"/>
    <isoform>
        <id>P21525-5</id>
        <name>F</name>
        <sequence type="displayed"/>
    </isoform>
    <isoform>
        <id>P21525-2</id>
        <name>A</name>
        <name>beta</name>
        <sequence type="described" ref="VSP_017891"/>
    </isoform>
    <isoform>
        <id>P21525-3</id>
        <name>B</name>
        <name>gamma</name>
        <sequence type="described" ref="VSP_017892"/>
    </isoform>
    <isoform>
        <id>A8MPH9-1</id>
        <name>D</name>
        <name>alpha</name>
        <sequence type="external"/>
    </isoform>
    <isoform>
        <id>A8MPH9-2</id>
        <name>sro</name>
        <name>shroud</name>
        <sequence type="external"/>
    </isoform>
</comment>
<comment type="tissue specificity">
    <text evidence="5">Early expression in the embryo is mesodermal and some of this expression is localized to a region surrounding the cephalic furrow. Later in embryonic development expression is ectodermal, corresponding to muscle attachment sites. Also observed in part of the mid- and hindgut and in the anal pad.</text>
</comment>
<comment type="developmental stage">
    <text evidence="4 5">Isoform A and isoform B are expressed both maternally and zygotically. Zygotically expressed throughout embryogenesis, until second larval instar. Isoform A is more highly expressed than isoform B.</text>
</comment>
<comment type="disruption phenotype">
    <text evidence="4">Loss of isoform A causes embryonic lethality.</text>
</comment>
<comment type="miscellaneous">
    <text>Mammals typically have four copies of fos, Drosophila has a single gene with multiple transcription start sites giving rise to multiple protein isoforms.</text>
</comment>
<comment type="miscellaneous">
    <molecule>Isoform A</molecule>
    <text evidence="11">Produced by alternative promoter usage.</text>
</comment>
<comment type="miscellaneous">
    <molecule>Isoform B</molecule>
    <text evidence="11">Produced by alternative promoter usage.</text>
</comment>
<comment type="similarity">
    <text evidence="11">Belongs to the bZIP family. Fos subfamily.</text>
</comment>
<proteinExistence type="evidence at protein level"/>
<sequence>MKNLNGRTHNACYHPYYHQSLHFAQQQQQQQQHHLQQQQQHMQQQQQQQQAPQQQLRHQQRQLPTQPAYQQSQSVAHNAFPLRSSSNNYGHVASSAYAASSGSHNSNNAAAMAAVCQMQNFFNQQQQQQQQLEFNNNCMPINYYQQQQQQHYPSESQSSASGWNPETPGQAQLALTATTCNTTAAATCNTTAAATTSTTATSAAAGSDNNHSDNFAMDASEIATFLANELFLQQLGNFETGQSVLTLTTPTLTPTTTRNIEDTLGHLLSDTQTDRVAGCAGFAVPKVLPNAIDVLGMGIPTGVSSLPLQQTFDLSLGQGSESEDSNASYNDTQMNEEQDTTDTSSAHTDSTSYQAGHIMAGSVNGGGVNNFSNVLAAVSSSRGSASVGSSNANTSNTPARRGGGRRPNRSTNMTPEEEQKRAVRRERNKQAAARCRKRRVDQTNELTEEVEQLEKRGESMRKEIEVLTNSKNQLEYLLATHRATCQKIRSDMLSVVTCNGLIAPAGLLSAGSSGSGASSHHNHNSNDSSNGTITGMDATLNSTGRSNSPLDLKPAANIDSLLMHIKDEPLDGAIDSGSSLDQDGPPPSKRITLPPMSTMPHVHLSTILTPTGASSGSLQTPITSTAPGGFGSAFPVTSNGSSINNINSIGNNMNSPTLNAHNKVPKERPNTLAFQRPLGQMHLTMANNKAGGPTQIQGVPIQTPSTGTFNFDSLMDGGTGLTPVSGPLVPNSSSTNKHPLELPTPTAEPSKLVSL</sequence>
<feature type="chain" id="PRO_0000076478" description="Transcription factor kayak, isoforms A/B/F">
    <location>
        <begin position="1"/>
        <end position="755"/>
    </location>
</feature>
<feature type="domain" description="bZIP" evidence="1">
    <location>
        <begin position="418"/>
        <end position="481"/>
    </location>
</feature>
<feature type="region of interest" description="Disordered" evidence="2">
    <location>
        <begin position="23"/>
        <end position="75"/>
    </location>
</feature>
<feature type="region of interest" description="Disordered" evidence="2">
    <location>
        <begin position="149"/>
        <end position="168"/>
    </location>
</feature>
<feature type="region of interest" description="Disordered" evidence="2">
    <location>
        <begin position="316"/>
        <end position="350"/>
    </location>
</feature>
<feature type="region of interest" description="Disordered" evidence="2">
    <location>
        <begin position="383"/>
        <end position="440"/>
    </location>
</feature>
<feature type="region of interest" description="Basic motif" evidence="1">
    <location>
        <begin position="420"/>
        <end position="439"/>
    </location>
</feature>
<feature type="region of interest" description="Leucine-zipper" evidence="1">
    <location>
        <begin position="446"/>
        <end position="453"/>
    </location>
</feature>
<feature type="region of interest" description="Disordered" evidence="2">
    <location>
        <begin position="510"/>
        <end position="552"/>
    </location>
</feature>
<feature type="region of interest" description="Disordered" evidence="2">
    <location>
        <begin position="716"/>
        <end position="755"/>
    </location>
</feature>
<feature type="compositionally biased region" description="Low complexity" evidence="2">
    <location>
        <begin position="23"/>
        <end position="66"/>
    </location>
</feature>
<feature type="compositionally biased region" description="Low complexity" evidence="2">
    <location>
        <begin position="149"/>
        <end position="159"/>
    </location>
</feature>
<feature type="compositionally biased region" description="Polar residues" evidence="2">
    <location>
        <begin position="316"/>
        <end position="333"/>
    </location>
</feature>
<feature type="compositionally biased region" description="Low complexity" evidence="2">
    <location>
        <begin position="341"/>
        <end position="350"/>
    </location>
</feature>
<feature type="compositionally biased region" description="Low complexity" evidence="2">
    <location>
        <begin position="383"/>
        <end position="397"/>
    </location>
</feature>
<feature type="compositionally biased region" description="Low complexity" evidence="2">
    <location>
        <begin position="510"/>
        <end position="531"/>
    </location>
</feature>
<feature type="compositionally biased region" description="Polar residues" evidence="2">
    <location>
        <begin position="539"/>
        <end position="549"/>
    </location>
</feature>
<feature type="modified residue" description="Phosphoserine" evidence="3">
    <location>
        <position position="548"/>
    </location>
</feature>
<feature type="splice variant" id="VSP_017891" description="In isoform A." evidence="6 9 10">
    <original>MKNLNGRTHNACYHPYYHQSLHFAQQQQQQQQHHLQQQQQHMQQQQQQQQAPQQQLRHQQRQLPTQPAYQQSQSVAHNAFPLRSSSNNYGHVASSAYAASSGSHNSNNAAAMAAVCQMQNFFNQQQQQQQQLEFNNNCMPINYYQQQQQQHYPSESQSSASGWNPETPGQAQLALTATTCNTTAAATCNTTAAATTSTTATSAAAGSDNNHSDNFAMDASEIATFLANELFLQQ</original>
    <variation>MKVKVERTTKKPAIRKPEDPDPAEEDRVKMVQDDPEDQENQAVDEEELDFLPADLSAAISTATTKIATPTRNLI</variation>
    <location>
        <begin position="1"/>
        <end position="234"/>
    </location>
</feature>
<feature type="splice variant" id="VSP_017892" description="In isoform B." evidence="7 8">
    <original>MKNLNGRTHNACYHPYYHQSLHFAQQQQQQQQHHLQQQQQHMQQQQQQQQAPQQQLRHQQRQLPTQPAYQQSQSVAHNAFPLRSSSNNYGHVASSAYAASSGSHNSNNAAAMAAVCQMQNFFNQQQQQQQQLEFNNNCMPINYYQQQQQQHYPSESQSSASGWNPETPGQAQLALTATTCNTTAAATCNTTAAATTSTTATSAAAGSDNNHSDNFAMDASEIATFLANELFLQQ</original>
    <variation>MTLDSYNIFNDEYLFNMPLSPLPKV</variation>
    <location>
        <begin position="1"/>
        <end position="234"/>
    </location>
</feature>
<feature type="sequence conflict" description="In Ref. 1; CAA38082." evidence="11" ref="1">
    <original>A</original>
    <variation>P</variation>
    <location>
        <position position="613"/>
    </location>
</feature>
<feature type="sequence conflict" description="In Ref. 3; AAK11267/AAK11268." evidence="11" ref="3">
    <original>D</original>
    <variation>N</variation>
    <location sequence="P21525-2">
        <position position="19"/>
    </location>
</feature>
<name>FOSLA_DROME</name>
<dbReference type="EMBL" id="X54143">
    <property type="protein sequence ID" value="CAA38082.1"/>
    <property type="molecule type" value="mRNA"/>
</dbReference>
<dbReference type="EMBL" id="AF238310">
    <property type="protein sequence ID" value="AAF69496.1"/>
    <property type="molecule type" value="mRNA"/>
</dbReference>
<dbReference type="EMBL" id="AY574373">
    <property type="protein sequence ID" value="AAS87366.1"/>
    <property type="molecule type" value="mRNA"/>
</dbReference>
<dbReference type="EMBL" id="AH010388">
    <property type="protein sequence ID" value="AAK11268.2"/>
    <property type="molecule type" value="mRNA"/>
</dbReference>
<dbReference type="EMBL" id="AF332660">
    <property type="protein sequence ID" value="AAK11267.2"/>
    <property type="molecule type" value="mRNA"/>
</dbReference>
<dbReference type="EMBL" id="DQ858476">
    <property type="protein sequence ID" value="ABI74758.1"/>
    <property type="molecule type" value="mRNA"/>
</dbReference>
<dbReference type="EMBL" id="AE014297">
    <property type="protein sequence ID" value="AAZ83992.1"/>
    <property type="molecule type" value="Genomic_DNA"/>
</dbReference>
<dbReference type="EMBL" id="AE014297">
    <property type="protein sequence ID" value="AAZ83993.1"/>
    <property type="molecule type" value="Genomic_DNA"/>
</dbReference>
<dbReference type="EMBL" id="AE014297">
    <property type="protein sequence ID" value="AAZ83994.2"/>
    <property type="molecule type" value="Genomic_DNA"/>
</dbReference>
<dbReference type="EMBL" id="AY069805">
    <property type="protein sequence ID" value="AAL39950.1"/>
    <property type="molecule type" value="mRNA"/>
</dbReference>
<dbReference type="PIR" id="A35847">
    <property type="entry name" value="A35847"/>
</dbReference>
<dbReference type="RefSeq" id="NP_001027577.2">
    <molecule id="P21525-5"/>
    <property type="nucleotide sequence ID" value="NM_001032405.4"/>
</dbReference>
<dbReference type="RefSeq" id="NP_001027578.1">
    <molecule id="P21525-3"/>
    <property type="nucleotide sequence ID" value="NM_001032406.2"/>
</dbReference>
<dbReference type="RefSeq" id="NP_001027579.1">
    <molecule id="P21525-2"/>
    <property type="nucleotide sequence ID" value="NM_001032407.3"/>
</dbReference>
<dbReference type="SMR" id="P21525"/>
<dbReference type="BioGRID" id="533679">
    <property type="interactions" value="67"/>
</dbReference>
<dbReference type="DIP" id="DIP-22245N"/>
<dbReference type="FunCoup" id="P21525">
    <property type="interactions" value="480"/>
</dbReference>
<dbReference type="IntAct" id="P21525">
    <property type="interactions" value="2"/>
</dbReference>
<dbReference type="STRING" id="7227.FBpp0288515"/>
<dbReference type="iPTMnet" id="P21525"/>
<dbReference type="PaxDb" id="7227-FBpp0288515"/>
<dbReference type="DNASU" id="3772082"/>
<dbReference type="EnsemblMetazoa" id="FBtr0099989">
    <molecule id="P21525-2"/>
    <property type="protein sequence ID" value="FBpp0084844"/>
    <property type="gene ID" value="FBgn0001297"/>
</dbReference>
<dbReference type="EnsemblMetazoa" id="FBtr0099990">
    <molecule id="P21525-3"/>
    <property type="protein sequence ID" value="FBpp0084846"/>
    <property type="gene ID" value="FBgn0001297"/>
</dbReference>
<dbReference type="EnsemblMetazoa" id="FBtr0290076">
    <molecule id="P21525-5"/>
    <property type="protein sequence ID" value="FBpp0288515"/>
    <property type="gene ID" value="FBgn0001297"/>
</dbReference>
<dbReference type="GeneID" id="3772082"/>
<dbReference type="KEGG" id="dme:Dmel_CG33956"/>
<dbReference type="AGR" id="FB:FBgn0001297"/>
<dbReference type="CTD" id="3772082"/>
<dbReference type="FlyBase" id="FBgn0001297">
    <property type="gene designation" value="kay"/>
</dbReference>
<dbReference type="VEuPathDB" id="VectorBase:FBgn0001297"/>
<dbReference type="eggNOG" id="KOG1414">
    <property type="taxonomic scope" value="Eukaryota"/>
</dbReference>
<dbReference type="InParanoid" id="P21525"/>
<dbReference type="OMA" id="HQSLHFA"/>
<dbReference type="OrthoDB" id="5866312at2759"/>
<dbReference type="PhylomeDB" id="P21525"/>
<dbReference type="Reactome" id="R-DME-209394">
    <property type="pathway name" value="Transcriptional activtion and repression of REL-68 target genes"/>
</dbReference>
<dbReference type="Reactome" id="R-DME-209409">
    <property type="pathway name" value="Formation of the nuclear AP-1 transcription factor 'scaffolding complex'"/>
</dbReference>
<dbReference type="Reactome" id="R-DME-209425">
    <property type="pathway name" value="Transcriptional activtion by AP-1 transcription factor"/>
</dbReference>
<dbReference type="Reactome" id="R-DME-2559580">
    <property type="pathway name" value="Oxidative Stress Induced Senescence"/>
</dbReference>
<dbReference type="Reactome" id="R-DME-2871796">
    <property type="pathway name" value="FCERI mediated MAPK activation"/>
</dbReference>
<dbReference type="Reactome" id="R-DME-450341">
    <property type="pathway name" value="Activation of the AP-1 family of transcription factors"/>
</dbReference>
<dbReference type="Reactome" id="R-DME-9018519">
    <property type="pathway name" value="Estrogen-dependent gene expression"/>
</dbReference>
<dbReference type="SignaLink" id="P21525"/>
<dbReference type="BioGRID-ORCS" id="3772082">
    <property type="hits" value="2 hits in 3 CRISPR screens"/>
</dbReference>
<dbReference type="ChiTaRS" id="kay">
    <property type="organism name" value="fly"/>
</dbReference>
<dbReference type="GenomeRNAi" id="3772082"/>
<dbReference type="Proteomes" id="UP000000803">
    <property type="component" value="Chromosome 3R"/>
</dbReference>
<dbReference type="Bgee" id="FBgn0001297">
    <property type="expression patterns" value="Expressed in adult glial cell (Drosophila) in body wall and 264 other cell types or tissues"/>
</dbReference>
<dbReference type="ExpressionAtlas" id="P21525">
    <property type="expression patterns" value="baseline and differential"/>
</dbReference>
<dbReference type="GO" id="GO:0005737">
    <property type="term" value="C:cytoplasm"/>
    <property type="evidence" value="ECO:0000314"/>
    <property type="project" value="FlyBase"/>
</dbReference>
<dbReference type="GO" id="GO:0005654">
    <property type="term" value="C:nucleoplasm"/>
    <property type="evidence" value="ECO:0000304"/>
    <property type="project" value="Reactome"/>
</dbReference>
<dbReference type="GO" id="GO:0005634">
    <property type="term" value="C:nucleus"/>
    <property type="evidence" value="ECO:0000314"/>
    <property type="project" value="FlyBase"/>
</dbReference>
<dbReference type="GO" id="GO:0035976">
    <property type="term" value="C:transcription factor AP-1 complex"/>
    <property type="evidence" value="ECO:0000353"/>
    <property type="project" value="FlyBase"/>
</dbReference>
<dbReference type="GO" id="GO:0003677">
    <property type="term" value="F:DNA binding"/>
    <property type="evidence" value="ECO:0000314"/>
    <property type="project" value="FlyBase"/>
</dbReference>
<dbReference type="GO" id="GO:0001228">
    <property type="term" value="F:DNA-binding transcription activator activity, RNA polymerase II-specific"/>
    <property type="evidence" value="ECO:0000314"/>
    <property type="project" value="FlyBase"/>
</dbReference>
<dbReference type="GO" id="GO:0000981">
    <property type="term" value="F:DNA-binding transcription factor activity, RNA polymerase II-specific"/>
    <property type="evidence" value="ECO:0000314"/>
    <property type="project" value="FlyBase"/>
</dbReference>
<dbReference type="GO" id="GO:0140297">
    <property type="term" value="F:DNA-binding transcription factor binding"/>
    <property type="evidence" value="ECO:0000353"/>
    <property type="project" value="FlyBase"/>
</dbReference>
<dbReference type="GO" id="GO:0046982">
    <property type="term" value="F:protein heterodimerization activity"/>
    <property type="evidence" value="ECO:0000353"/>
    <property type="project" value="FlyBase"/>
</dbReference>
<dbReference type="GO" id="GO:0000978">
    <property type="term" value="F:RNA polymerase II cis-regulatory region sequence-specific DNA binding"/>
    <property type="evidence" value="ECO:0000314"/>
    <property type="project" value="FlyBase"/>
</dbReference>
<dbReference type="GO" id="GO:0048674">
    <property type="term" value="P:collateral sprouting of injured axon"/>
    <property type="evidence" value="ECO:0000315"/>
    <property type="project" value="FlyBase"/>
</dbReference>
<dbReference type="GO" id="GO:0048749">
    <property type="term" value="P:compound eye development"/>
    <property type="evidence" value="ECO:0000315"/>
    <property type="project" value="FlyBase"/>
</dbReference>
<dbReference type="GO" id="GO:0048813">
    <property type="term" value="P:dendrite morphogenesis"/>
    <property type="evidence" value="ECO:0000315"/>
    <property type="project" value="FlyBase"/>
</dbReference>
<dbReference type="GO" id="GO:0007391">
    <property type="term" value="P:dorsal closure"/>
    <property type="evidence" value="ECO:0000315"/>
    <property type="project" value="FlyBase"/>
</dbReference>
<dbReference type="GO" id="GO:0009792">
    <property type="term" value="P:embryo development ending in birth or egg hatching"/>
    <property type="evidence" value="ECO:0000315"/>
    <property type="project" value="UniProtKB"/>
</dbReference>
<dbReference type="GO" id="GO:0007163">
    <property type="term" value="P:establishment or maintenance of cell polarity"/>
    <property type="evidence" value="ECO:0000315"/>
    <property type="project" value="BHF-UCL"/>
</dbReference>
<dbReference type="GO" id="GO:0007297">
    <property type="term" value="P:follicle cell of egg chamber migration"/>
    <property type="evidence" value="ECO:0000315"/>
    <property type="project" value="FlyBase"/>
</dbReference>
<dbReference type="GO" id="GO:0000086">
    <property type="term" value="P:G2/M transition of mitotic cell cycle"/>
    <property type="evidence" value="ECO:0000315"/>
    <property type="project" value="FlyBase"/>
</dbReference>
<dbReference type="GO" id="GO:0007281">
    <property type="term" value="P:germ cell development"/>
    <property type="evidence" value="ECO:0000315"/>
    <property type="project" value="FlyBase"/>
</dbReference>
<dbReference type="GO" id="GO:0046529">
    <property type="term" value="P:imaginal disc fusion, thorax closure"/>
    <property type="evidence" value="ECO:0000315"/>
    <property type="project" value="FlyBase"/>
</dbReference>
<dbReference type="GO" id="GO:0045475">
    <property type="term" value="P:locomotor rhythm"/>
    <property type="evidence" value="ECO:0000315"/>
    <property type="project" value="FlyBase"/>
</dbReference>
<dbReference type="GO" id="GO:0040013">
    <property type="term" value="P:negative regulation of locomotion"/>
    <property type="evidence" value="ECO:0000315"/>
    <property type="project" value="FlyBase"/>
</dbReference>
<dbReference type="GO" id="GO:0061057">
    <property type="term" value="P:peptidoglycan recognition protein signaling pathway"/>
    <property type="evidence" value="ECO:0000315"/>
    <property type="project" value="FlyBase"/>
</dbReference>
<dbReference type="GO" id="GO:0006964">
    <property type="term" value="P:positive regulation of biosynthetic process of antibacterial peptides active against Gram-negative bacteria"/>
    <property type="evidence" value="ECO:0007001"/>
    <property type="project" value="FlyBase"/>
</dbReference>
<dbReference type="GO" id="GO:1903688">
    <property type="term" value="P:positive regulation of border follicle cell migration"/>
    <property type="evidence" value="ECO:0000316"/>
    <property type="project" value="FlyBase"/>
</dbReference>
<dbReference type="GO" id="GO:0045944">
    <property type="term" value="P:positive regulation of transcription by RNA polymerase II"/>
    <property type="evidence" value="ECO:0000314"/>
    <property type="project" value="FlyBase"/>
</dbReference>
<dbReference type="GO" id="GO:0007464">
    <property type="term" value="P:R3/R4 cell fate commitment"/>
    <property type="evidence" value="ECO:0000315"/>
    <property type="project" value="FlyBase"/>
</dbReference>
<dbReference type="GO" id="GO:0006357">
    <property type="term" value="P:regulation of transcription by RNA polymerase II"/>
    <property type="evidence" value="ECO:0000318"/>
    <property type="project" value="GO_Central"/>
</dbReference>
<dbReference type="GO" id="GO:0009611">
    <property type="term" value="P:response to wounding"/>
    <property type="evidence" value="ECO:0000315"/>
    <property type="project" value="FlyBase"/>
</dbReference>
<dbReference type="GO" id="GO:0016330">
    <property type="term" value="P:second mitotic wave involved in compound eye morphogenesis"/>
    <property type="evidence" value="ECO:0000315"/>
    <property type="project" value="FlyBase"/>
</dbReference>
<dbReference type="GO" id="GO:0051124">
    <property type="term" value="P:synaptic assembly at neuromuscular junction"/>
    <property type="evidence" value="ECO:0000316"/>
    <property type="project" value="FlyBase"/>
</dbReference>
<dbReference type="GO" id="GO:0035220">
    <property type="term" value="P:wing disc development"/>
    <property type="evidence" value="ECO:0000315"/>
    <property type="project" value="FlyBase"/>
</dbReference>
<dbReference type="GO" id="GO:0042060">
    <property type="term" value="P:wound healing"/>
    <property type="evidence" value="ECO:0000315"/>
    <property type="project" value="FlyBase"/>
</dbReference>
<dbReference type="CDD" id="cd14721">
    <property type="entry name" value="bZIP_Fos"/>
    <property type="match status" value="1"/>
</dbReference>
<dbReference type="Gene3D" id="1.20.5.170">
    <property type="match status" value="1"/>
</dbReference>
<dbReference type="InterPro" id="IPR000837">
    <property type="entry name" value="AP-1"/>
</dbReference>
<dbReference type="InterPro" id="IPR004827">
    <property type="entry name" value="bZIP"/>
</dbReference>
<dbReference type="InterPro" id="IPR046347">
    <property type="entry name" value="bZIP_sf"/>
</dbReference>
<dbReference type="PANTHER" id="PTHR23351:SF24">
    <property type="entry name" value="ACTIVATING TRANSCRIPTION FACTOR 3-RELATED"/>
    <property type="match status" value="1"/>
</dbReference>
<dbReference type="PANTHER" id="PTHR23351">
    <property type="entry name" value="FOS TRANSCRIPTION FACTOR-RELATED"/>
    <property type="match status" value="1"/>
</dbReference>
<dbReference type="Pfam" id="PF00170">
    <property type="entry name" value="bZIP_1"/>
    <property type="match status" value="1"/>
</dbReference>
<dbReference type="PRINTS" id="PR00042">
    <property type="entry name" value="LEUZIPPRFOS"/>
</dbReference>
<dbReference type="SMART" id="SM00338">
    <property type="entry name" value="BRLZ"/>
    <property type="match status" value="1"/>
</dbReference>
<dbReference type="SUPFAM" id="SSF57959">
    <property type="entry name" value="Leucine zipper domain"/>
    <property type="match status" value="1"/>
</dbReference>
<dbReference type="PROSITE" id="PS50217">
    <property type="entry name" value="BZIP"/>
    <property type="match status" value="1"/>
</dbReference>
<dbReference type="PROSITE" id="PS00036">
    <property type="entry name" value="BZIP_BASIC"/>
    <property type="match status" value="1"/>
</dbReference>
<organism>
    <name type="scientific">Drosophila melanogaster</name>
    <name type="common">Fruit fly</name>
    <dbReference type="NCBI Taxonomy" id="7227"/>
    <lineage>
        <taxon>Eukaryota</taxon>
        <taxon>Metazoa</taxon>
        <taxon>Ecdysozoa</taxon>
        <taxon>Arthropoda</taxon>
        <taxon>Hexapoda</taxon>
        <taxon>Insecta</taxon>
        <taxon>Pterygota</taxon>
        <taxon>Neoptera</taxon>
        <taxon>Endopterygota</taxon>
        <taxon>Diptera</taxon>
        <taxon>Brachycera</taxon>
        <taxon>Muscomorpha</taxon>
        <taxon>Ephydroidea</taxon>
        <taxon>Drosophilidae</taxon>
        <taxon>Drosophila</taxon>
        <taxon>Sophophora</taxon>
    </lineage>
</organism>
<protein>
    <recommendedName>
        <fullName>Transcription factor kayak, isoforms A/B/F</fullName>
    </recommendedName>
    <alternativeName>
        <fullName>AP-1</fullName>
    </alternativeName>
    <alternativeName>
        <fullName>Fos-related antigen</fullName>
        <shortName>Dfos</shortName>
        <shortName>dFra</shortName>
    </alternativeName>
</protein>
<evidence type="ECO:0000255" key="1">
    <source>
        <dbReference type="PROSITE-ProRule" id="PRU00978"/>
    </source>
</evidence>
<evidence type="ECO:0000256" key="2">
    <source>
        <dbReference type="SAM" id="MobiDB-lite"/>
    </source>
</evidence>
<evidence type="ECO:0000269" key="3">
    <source>
    </source>
</evidence>
<evidence type="ECO:0000269" key="4">
    <source>
    </source>
</evidence>
<evidence type="ECO:0000269" key="5">
    <source>
    </source>
</evidence>
<evidence type="ECO:0000303" key="6">
    <source>
    </source>
</evidence>
<evidence type="ECO:0000303" key="7">
    <source>
    </source>
</evidence>
<evidence type="ECO:0000303" key="8">
    <source>
    </source>
</evidence>
<evidence type="ECO:0000303" key="9">
    <source>
    </source>
</evidence>
<evidence type="ECO:0000303" key="10">
    <source ref="2"/>
</evidence>
<evidence type="ECO:0000305" key="11"/>